<reference key="1">
    <citation type="journal article" date="2011" name="J. Bacteriol.">
        <title>Comparative genomics of 28 Salmonella enterica isolates: evidence for CRISPR-mediated adaptive sublineage evolution.</title>
        <authorList>
            <person name="Fricke W.F."/>
            <person name="Mammel M.K."/>
            <person name="McDermott P.F."/>
            <person name="Tartera C."/>
            <person name="White D.G."/>
            <person name="Leclerc J.E."/>
            <person name="Ravel J."/>
            <person name="Cebula T.A."/>
        </authorList>
    </citation>
    <scope>NUCLEOTIDE SEQUENCE [LARGE SCALE GENOMIC DNA]</scope>
    <source>
        <strain>SL483</strain>
    </source>
</reference>
<protein>
    <recommendedName>
        <fullName evidence="1">ATP-dependent protease ATPase subunit HslU</fullName>
    </recommendedName>
    <alternativeName>
        <fullName evidence="1">Heat shock protein HslU</fullName>
    </alternativeName>
    <alternativeName>
        <fullName evidence="1">Unfoldase HslU</fullName>
    </alternativeName>
</protein>
<proteinExistence type="inferred from homology"/>
<organism>
    <name type="scientific">Salmonella agona (strain SL483)</name>
    <dbReference type="NCBI Taxonomy" id="454166"/>
    <lineage>
        <taxon>Bacteria</taxon>
        <taxon>Pseudomonadati</taxon>
        <taxon>Pseudomonadota</taxon>
        <taxon>Gammaproteobacteria</taxon>
        <taxon>Enterobacterales</taxon>
        <taxon>Enterobacteriaceae</taxon>
        <taxon>Salmonella</taxon>
    </lineage>
</organism>
<evidence type="ECO:0000255" key="1">
    <source>
        <dbReference type="HAMAP-Rule" id="MF_00249"/>
    </source>
</evidence>
<comment type="function">
    <text evidence="1">ATPase subunit of a proteasome-like degradation complex; this subunit has chaperone activity. The binding of ATP and its subsequent hydrolysis by HslU are essential for unfolding of protein substrates subsequently hydrolyzed by HslV. HslU recognizes the N-terminal part of its protein substrates and unfolds these before they are guided to HslV for hydrolysis.</text>
</comment>
<comment type="subunit">
    <text evidence="1">A double ring-shaped homohexamer of HslV is capped on each side by a ring-shaped HslU homohexamer. The assembly of the HslU/HslV complex is dependent on binding of ATP.</text>
</comment>
<comment type="subcellular location">
    <subcellularLocation>
        <location evidence="1">Cytoplasm</location>
    </subcellularLocation>
</comment>
<comment type="induction">
    <text evidence="1">By heat shock.</text>
</comment>
<comment type="similarity">
    <text evidence="1">Belongs to the ClpX chaperone family. HslU subfamily.</text>
</comment>
<keyword id="KW-0067">ATP-binding</keyword>
<keyword id="KW-0143">Chaperone</keyword>
<keyword id="KW-0963">Cytoplasm</keyword>
<keyword id="KW-0547">Nucleotide-binding</keyword>
<keyword id="KW-0346">Stress response</keyword>
<name>HSLU_SALA4</name>
<gene>
    <name evidence="1" type="primary">hslU</name>
    <name type="ordered locus">SeAg_B4337</name>
</gene>
<accession>B5F0S2</accession>
<dbReference type="EMBL" id="CP001138">
    <property type="protein sequence ID" value="ACH49526.1"/>
    <property type="molecule type" value="Genomic_DNA"/>
</dbReference>
<dbReference type="RefSeq" id="WP_001293360.1">
    <property type="nucleotide sequence ID" value="NC_011149.1"/>
</dbReference>
<dbReference type="SMR" id="B5F0S2"/>
<dbReference type="KEGG" id="sea:SeAg_B4337"/>
<dbReference type="HOGENOM" id="CLU_033123_0_0_6"/>
<dbReference type="Proteomes" id="UP000008819">
    <property type="component" value="Chromosome"/>
</dbReference>
<dbReference type="GO" id="GO:0009376">
    <property type="term" value="C:HslUV protease complex"/>
    <property type="evidence" value="ECO:0007669"/>
    <property type="project" value="UniProtKB-UniRule"/>
</dbReference>
<dbReference type="GO" id="GO:0005524">
    <property type="term" value="F:ATP binding"/>
    <property type="evidence" value="ECO:0007669"/>
    <property type="project" value="UniProtKB-UniRule"/>
</dbReference>
<dbReference type="GO" id="GO:0016887">
    <property type="term" value="F:ATP hydrolysis activity"/>
    <property type="evidence" value="ECO:0007669"/>
    <property type="project" value="InterPro"/>
</dbReference>
<dbReference type="GO" id="GO:0008233">
    <property type="term" value="F:peptidase activity"/>
    <property type="evidence" value="ECO:0007669"/>
    <property type="project" value="InterPro"/>
</dbReference>
<dbReference type="GO" id="GO:0036402">
    <property type="term" value="F:proteasome-activating activity"/>
    <property type="evidence" value="ECO:0007669"/>
    <property type="project" value="UniProtKB-UniRule"/>
</dbReference>
<dbReference type="GO" id="GO:0043335">
    <property type="term" value="P:protein unfolding"/>
    <property type="evidence" value="ECO:0007669"/>
    <property type="project" value="UniProtKB-UniRule"/>
</dbReference>
<dbReference type="GO" id="GO:0051603">
    <property type="term" value="P:proteolysis involved in protein catabolic process"/>
    <property type="evidence" value="ECO:0007669"/>
    <property type="project" value="TreeGrafter"/>
</dbReference>
<dbReference type="CDD" id="cd19498">
    <property type="entry name" value="RecA-like_HslU"/>
    <property type="match status" value="1"/>
</dbReference>
<dbReference type="FunFam" id="1.10.8.10:FF:000012">
    <property type="entry name" value="ATP-dependent protease ATPase subunit HslU"/>
    <property type="match status" value="1"/>
</dbReference>
<dbReference type="FunFam" id="1.10.8.10:FF:000028">
    <property type="entry name" value="ATP-dependent protease ATPase subunit HslU"/>
    <property type="match status" value="1"/>
</dbReference>
<dbReference type="FunFam" id="1.10.8.60:FF:000027">
    <property type="entry name" value="ATP-dependent protease ATPase subunit HslU"/>
    <property type="match status" value="1"/>
</dbReference>
<dbReference type="FunFam" id="3.40.50.300:FF:000213">
    <property type="entry name" value="ATP-dependent protease ATPase subunit HslU"/>
    <property type="match status" value="1"/>
</dbReference>
<dbReference type="FunFam" id="3.40.50.300:FF:000220">
    <property type="entry name" value="ATP-dependent protease ATPase subunit HslU"/>
    <property type="match status" value="1"/>
</dbReference>
<dbReference type="Gene3D" id="1.10.8.60">
    <property type="match status" value="1"/>
</dbReference>
<dbReference type="Gene3D" id="1.10.8.10">
    <property type="entry name" value="DNA helicase RuvA subunit, C-terminal domain"/>
    <property type="match status" value="2"/>
</dbReference>
<dbReference type="Gene3D" id="3.40.50.300">
    <property type="entry name" value="P-loop containing nucleotide triphosphate hydrolases"/>
    <property type="match status" value="1"/>
</dbReference>
<dbReference type="HAMAP" id="MF_00249">
    <property type="entry name" value="HslU"/>
    <property type="match status" value="1"/>
</dbReference>
<dbReference type="InterPro" id="IPR003593">
    <property type="entry name" value="AAA+_ATPase"/>
</dbReference>
<dbReference type="InterPro" id="IPR050052">
    <property type="entry name" value="ATP-dep_Clp_protease_ClpX"/>
</dbReference>
<dbReference type="InterPro" id="IPR003959">
    <property type="entry name" value="ATPase_AAA_core"/>
</dbReference>
<dbReference type="InterPro" id="IPR019489">
    <property type="entry name" value="Clp_ATPase_C"/>
</dbReference>
<dbReference type="InterPro" id="IPR004491">
    <property type="entry name" value="HslU"/>
</dbReference>
<dbReference type="InterPro" id="IPR027417">
    <property type="entry name" value="P-loop_NTPase"/>
</dbReference>
<dbReference type="NCBIfam" id="TIGR00390">
    <property type="entry name" value="hslU"/>
    <property type="match status" value="1"/>
</dbReference>
<dbReference type="NCBIfam" id="NF003544">
    <property type="entry name" value="PRK05201.1"/>
    <property type="match status" value="1"/>
</dbReference>
<dbReference type="PANTHER" id="PTHR48102">
    <property type="entry name" value="ATP-DEPENDENT CLP PROTEASE ATP-BINDING SUBUNIT CLPX-LIKE, MITOCHONDRIAL-RELATED"/>
    <property type="match status" value="1"/>
</dbReference>
<dbReference type="PANTHER" id="PTHR48102:SF3">
    <property type="entry name" value="ATP-DEPENDENT PROTEASE ATPASE SUBUNIT HSLU"/>
    <property type="match status" value="1"/>
</dbReference>
<dbReference type="Pfam" id="PF00004">
    <property type="entry name" value="AAA"/>
    <property type="match status" value="1"/>
</dbReference>
<dbReference type="Pfam" id="PF07724">
    <property type="entry name" value="AAA_2"/>
    <property type="match status" value="1"/>
</dbReference>
<dbReference type="SMART" id="SM00382">
    <property type="entry name" value="AAA"/>
    <property type="match status" value="1"/>
</dbReference>
<dbReference type="SMART" id="SM01086">
    <property type="entry name" value="ClpB_D2-small"/>
    <property type="match status" value="1"/>
</dbReference>
<dbReference type="SUPFAM" id="SSF52540">
    <property type="entry name" value="P-loop containing nucleoside triphosphate hydrolases"/>
    <property type="match status" value="1"/>
</dbReference>
<sequence>MSEMTPREIVSELNKHIIGQDNAKRSVAIALRNRWRRMQLDEELRHEVTPKNILMIGPTGVGKTEIARRLAKLANAPFIKVEATKFTEVGYVGKEVDSIIRDLTDAAVKMVRVQAIEKNRYRAEELAEERILDVLIPPAKNNWGQAEQQQEPSAARQTFRKKLREGQLDDKEIEINLAAAPMGVEIMAPPGMEEMTSQLQSMFQNLGGQKQKPRKLKIKDAMKLLVEEEAAKLVNPEELKQDAIDAVEQHGIVFIDEIDKICKRGETSGPDVSREGVQRDLLPLVEGCTVSTKHGMVKTDHILFIASGAFQVAKPSDLIPELQGRLPIRVELQALTTSDFERILTEPNASVTVQYKALMATEGVNIEFTDSGIKRIAEAAWQVNETTENIGARRLHTVLERLMEEISYNASDLHGQNITIDAEYVSKHLDALVADEDLSRFIL</sequence>
<feature type="chain" id="PRO_1000100968" description="ATP-dependent protease ATPase subunit HslU">
    <location>
        <begin position="1"/>
        <end position="443"/>
    </location>
</feature>
<feature type="binding site" evidence="1">
    <location>
        <position position="18"/>
    </location>
    <ligand>
        <name>ATP</name>
        <dbReference type="ChEBI" id="CHEBI:30616"/>
    </ligand>
</feature>
<feature type="binding site" evidence="1">
    <location>
        <begin position="60"/>
        <end position="65"/>
    </location>
    <ligand>
        <name>ATP</name>
        <dbReference type="ChEBI" id="CHEBI:30616"/>
    </ligand>
</feature>
<feature type="binding site" evidence="1">
    <location>
        <position position="256"/>
    </location>
    <ligand>
        <name>ATP</name>
        <dbReference type="ChEBI" id="CHEBI:30616"/>
    </ligand>
</feature>
<feature type="binding site" evidence="1">
    <location>
        <position position="321"/>
    </location>
    <ligand>
        <name>ATP</name>
        <dbReference type="ChEBI" id="CHEBI:30616"/>
    </ligand>
</feature>
<feature type="binding site" evidence="1">
    <location>
        <position position="393"/>
    </location>
    <ligand>
        <name>ATP</name>
        <dbReference type="ChEBI" id="CHEBI:30616"/>
    </ligand>
</feature>